<sequence length="464" mass="53056">MEIRLPDLALKRIFSFLDLFGLLQVSQVNKHWNRIADSDYLWRSLSLQRWDCSNFTNQHLGTHTWKQFFLHQRRKELRLALAQPHNFIYKVTKNIAFETELAYLSGNRLTVDEQEKSIICSVSPKQELCAWDVQEGTMIWSSPVQEFHFSNLVTLPQMHLAITMDRKKTIKVWNCQDRDALAVLPMPQPCYCMEAYLTKDGPFLMVGDAAGDIYTFTLPGLRDVSKVTAFQYGIVLLHCSPDKKWVFACGTYSRTLPQVFLTESLLRPSEGSVPLSTFLPHKLCASACWTPKVKNRITLMSQSSTGKKTEFITFDLTTKKTGGQTVIQAYEIASFQVAAHLKCPIWMGASDGYMIVFTSGPYLLLFSITGFLLQRFEDHQAAINNFWVDPCYVLTTSENSVHVYMWEEGGRHPYLRSCCHLENTWHDHTTDSCISSVMCDNASIVLRVRKVSDSSILVMYSLNT</sequence>
<protein>
    <recommendedName>
        <fullName>F-box/WD repeat-containing protein 12</fullName>
    </recommendedName>
    <alternativeName>
        <fullName>F-box and WD-40 domain-containing protein 12</fullName>
    </alternativeName>
    <alternativeName>
        <fullName>F-box only protein 35</fullName>
    </alternativeName>
</protein>
<name>FBW12_HUMAN</name>
<keyword id="KW-0025">Alternative splicing</keyword>
<keyword id="KW-1267">Proteomics identification</keyword>
<keyword id="KW-1185">Reference proteome</keyword>
<keyword id="KW-0677">Repeat</keyword>
<keyword id="KW-0833">Ubl conjugation pathway</keyword>
<keyword id="KW-0853">WD repeat</keyword>
<evidence type="ECO:0000250" key="1">
    <source>
        <dbReference type="UniProtKB" id="Q9UKT8"/>
    </source>
</evidence>
<evidence type="ECO:0000255" key="2">
    <source>
        <dbReference type="PROSITE-ProRule" id="PRU00080"/>
    </source>
</evidence>
<evidence type="ECO:0000269" key="3">
    <source>
    </source>
</evidence>
<evidence type="ECO:0000269" key="4">
    <source>
    </source>
</evidence>
<evidence type="ECO:0000269" key="5">
    <source>
    </source>
</evidence>
<evidence type="ECO:0000303" key="6">
    <source>
    </source>
</evidence>
<evidence type="ECO:0000305" key="7"/>
<gene>
    <name type="primary">FBXW12</name>
    <name type="synonym">FBW12</name>
    <name type="synonym">FBXO12</name>
    <name type="synonym">FBXO35</name>
</gene>
<organism>
    <name type="scientific">Homo sapiens</name>
    <name type="common">Human</name>
    <dbReference type="NCBI Taxonomy" id="9606"/>
    <lineage>
        <taxon>Eukaryota</taxon>
        <taxon>Metazoa</taxon>
        <taxon>Chordata</taxon>
        <taxon>Craniata</taxon>
        <taxon>Vertebrata</taxon>
        <taxon>Euteleostomi</taxon>
        <taxon>Mammalia</taxon>
        <taxon>Eutheria</taxon>
        <taxon>Euarchontoglires</taxon>
        <taxon>Primates</taxon>
        <taxon>Haplorrhini</taxon>
        <taxon>Catarrhini</taxon>
        <taxon>Hominidae</taxon>
        <taxon>Homo</taxon>
    </lineage>
</organism>
<proteinExistence type="evidence at protein level"/>
<feature type="chain" id="PRO_0000051000" description="F-box/WD repeat-containing protein 12">
    <location>
        <begin position="1"/>
        <end position="464"/>
    </location>
</feature>
<feature type="domain" description="F-box" evidence="2">
    <location>
        <begin position="1"/>
        <end position="45"/>
    </location>
</feature>
<feature type="repeat" description="WD 1">
    <location>
        <begin position="89"/>
        <end position="132"/>
    </location>
</feature>
<feature type="repeat" description="WD 2">
    <location>
        <begin position="136"/>
        <end position="174"/>
    </location>
</feature>
<feature type="repeat" description="WD 3">
    <location>
        <begin position="178"/>
        <end position="217"/>
    </location>
</feature>
<feature type="repeat" description="WD 4">
    <location>
        <begin position="222"/>
        <end position="263"/>
    </location>
</feature>
<feature type="repeat" description="WD 5">
    <location>
        <begin position="270"/>
        <end position="315"/>
    </location>
</feature>
<feature type="repeat" description="WD 6">
    <location>
        <begin position="320"/>
        <end position="367"/>
    </location>
</feature>
<feature type="repeat" description="WD 7">
    <location>
        <begin position="370"/>
        <end position="407"/>
    </location>
</feature>
<feature type="repeat" description="WD 8">
    <location>
        <begin position="416"/>
        <end position="461"/>
    </location>
</feature>
<feature type="splice variant" id="VSP_044601" description="In isoform 3." evidence="6">
    <original>MEIRLPDLALKRIFSFLDLFGLLQVSQVN</original>
    <variation>MSPTHQIQDP</variation>
    <location>
        <begin position="1"/>
        <end position="29"/>
    </location>
</feature>
<feature type="splice variant" id="VSP_042911" description="In isoform 2." evidence="6">
    <location>
        <begin position="136"/>
        <end position="205"/>
    </location>
</feature>
<feature type="sequence variant" id="VAR_057601" description="In dbSNP:rs17080138.">
    <original>P</original>
    <variation>L</variation>
    <location>
        <position position="6"/>
    </location>
</feature>
<feature type="sequence variant" id="VAR_057602" description="In dbSNP:rs6442117.">
    <original>R</original>
    <variation>W</variation>
    <location>
        <position position="166"/>
    </location>
</feature>
<feature type="sequence variant" id="VAR_057603" description="In dbSNP:rs6784322." evidence="3 4">
    <original>V</original>
    <variation>D</variation>
    <location>
        <position position="273"/>
    </location>
</feature>
<feature type="sequence conflict" description="In Ref. 3; AAI01306." evidence="7" ref="3">
    <original>F</original>
    <variation>L</variation>
    <location>
        <position position="278"/>
    </location>
</feature>
<feature type="sequence conflict" description="In Ref. 1; AAP75562." evidence="7" ref="1">
    <original>T</original>
    <variation>P</variation>
    <location>
        <position position="317"/>
    </location>
</feature>
<dbReference type="EMBL" id="AY247969">
    <property type="protein sequence ID" value="AAP75562.1"/>
    <property type="molecule type" value="mRNA"/>
</dbReference>
<dbReference type="EMBL" id="AC104448">
    <property type="status" value="NOT_ANNOTATED_CDS"/>
    <property type="molecule type" value="Genomic_DNA"/>
</dbReference>
<dbReference type="EMBL" id="BC101304">
    <property type="protein sequence ID" value="AAI01305.1"/>
    <property type="molecule type" value="mRNA"/>
</dbReference>
<dbReference type="EMBL" id="BC101305">
    <property type="protein sequence ID" value="AAI01306.1"/>
    <property type="molecule type" value="mRNA"/>
</dbReference>
<dbReference type="CCDS" id="CCDS2764.1">
    <molecule id="Q6X9E4-1"/>
</dbReference>
<dbReference type="CCDS" id="CCDS54577.1">
    <molecule id="Q6X9E4-3"/>
</dbReference>
<dbReference type="CCDS" id="CCDS54578.1">
    <molecule id="Q6X9E4-2"/>
</dbReference>
<dbReference type="RefSeq" id="NP_001153399.1">
    <molecule id="Q6X9E4-2"/>
    <property type="nucleotide sequence ID" value="NM_001159927.1"/>
</dbReference>
<dbReference type="RefSeq" id="NP_001153401.1">
    <molecule id="Q6X9E4-3"/>
    <property type="nucleotide sequence ID" value="NM_001159929.1"/>
</dbReference>
<dbReference type="RefSeq" id="NP_996985.2">
    <molecule id="Q6X9E4-1"/>
    <property type="nucleotide sequence ID" value="NM_207102.2"/>
</dbReference>
<dbReference type="RefSeq" id="XP_016861713.1">
    <property type="nucleotide sequence ID" value="XM_017006224.1"/>
</dbReference>
<dbReference type="BioGRID" id="130052">
    <property type="interactions" value="12"/>
</dbReference>
<dbReference type="ComplexPortal" id="CPX-7822">
    <property type="entry name" value="SCF E3 ubiquitin ligase complex, FBXW12 variant"/>
</dbReference>
<dbReference type="FunCoup" id="Q6X9E4">
    <property type="interactions" value="21"/>
</dbReference>
<dbReference type="IntAct" id="Q6X9E4">
    <property type="interactions" value="6"/>
</dbReference>
<dbReference type="STRING" id="9606.ENSP00000296438"/>
<dbReference type="iPTMnet" id="Q6X9E4"/>
<dbReference type="PhosphoSitePlus" id="Q6X9E4"/>
<dbReference type="BioMuta" id="FBXW12"/>
<dbReference type="DMDM" id="215273983"/>
<dbReference type="MassIVE" id="Q6X9E4"/>
<dbReference type="PaxDb" id="9606-ENSP00000296438"/>
<dbReference type="PeptideAtlas" id="Q6X9E4"/>
<dbReference type="ProteomicsDB" id="20236"/>
<dbReference type="ProteomicsDB" id="67792">
    <molecule id="Q6X9E4-1"/>
</dbReference>
<dbReference type="ProteomicsDB" id="67793">
    <molecule id="Q6X9E4-2"/>
</dbReference>
<dbReference type="Antibodypedia" id="30045">
    <property type="antibodies" value="162 antibodies from 22 providers"/>
</dbReference>
<dbReference type="DNASU" id="285231"/>
<dbReference type="Ensembl" id="ENST00000296438.9">
    <molecule id="Q6X9E4-1"/>
    <property type="protein sequence ID" value="ENSP00000296438.5"/>
    <property type="gene ID" value="ENSG00000164049.14"/>
</dbReference>
<dbReference type="Ensembl" id="ENST00000415155.5">
    <molecule id="Q6X9E4-2"/>
    <property type="protein sequence ID" value="ENSP00000414683.1"/>
    <property type="gene ID" value="ENSG00000164049.14"/>
</dbReference>
<dbReference type="Ensembl" id="ENST00000445170.5">
    <molecule id="Q6X9E4-3"/>
    <property type="protein sequence ID" value="ENSP00000406139.1"/>
    <property type="gene ID" value="ENSG00000164049.14"/>
</dbReference>
<dbReference type="GeneID" id="285231"/>
<dbReference type="KEGG" id="hsa:285231"/>
<dbReference type="MANE-Select" id="ENST00000296438.9">
    <property type="protein sequence ID" value="ENSP00000296438.5"/>
    <property type="RefSeq nucleotide sequence ID" value="NM_207102.2"/>
    <property type="RefSeq protein sequence ID" value="NP_996985.2"/>
</dbReference>
<dbReference type="UCSC" id="uc003csr.3">
    <molecule id="Q6X9E4-1"/>
    <property type="organism name" value="human"/>
</dbReference>
<dbReference type="AGR" id="HGNC:20729"/>
<dbReference type="CTD" id="285231"/>
<dbReference type="DisGeNET" id="285231"/>
<dbReference type="GeneCards" id="FBXW12"/>
<dbReference type="HGNC" id="HGNC:20729">
    <property type="gene designation" value="FBXW12"/>
</dbReference>
<dbReference type="HPA" id="ENSG00000164049">
    <property type="expression patterns" value="Tissue enriched (pancreas)"/>
</dbReference>
<dbReference type="MIM" id="609075">
    <property type="type" value="gene"/>
</dbReference>
<dbReference type="neXtProt" id="NX_Q6X9E4"/>
<dbReference type="OpenTargets" id="ENSG00000164049"/>
<dbReference type="PharmGKB" id="PA134980842"/>
<dbReference type="VEuPathDB" id="HostDB:ENSG00000164049"/>
<dbReference type="eggNOG" id="ENOG502QT73">
    <property type="taxonomic scope" value="Eukaryota"/>
</dbReference>
<dbReference type="GeneTree" id="ENSGT00940000162557"/>
<dbReference type="HOGENOM" id="CLU_046549_1_0_1"/>
<dbReference type="InParanoid" id="Q6X9E4"/>
<dbReference type="OMA" id="LHLYMWE"/>
<dbReference type="OrthoDB" id="63265at2759"/>
<dbReference type="PAN-GO" id="Q6X9E4">
    <property type="GO annotations" value="0 GO annotations based on evolutionary models"/>
</dbReference>
<dbReference type="PhylomeDB" id="Q6X9E4"/>
<dbReference type="TreeFam" id="TF332550"/>
<dbReference type="PathwayCommons" id="Q6X9E4"/>
<dbReference type="Reactome" id="R-HSA-8951664">
    <property type="pathway name" value="Neddylation"/>
</dbReference>
<dbReference type="Reactome" id="R-HSA-983168">
    <property type="pathway name" value="Antigen processing: Ubiquitination &amp; Proteasome degradation"/>
</dbReference>
<dbReference type="SIGNOR" id="Q6X9E4"/>
<dbReference type="UniPathway" id="UPA00143"/>
<dbReference type="BioGRID-ORCS" id="285231">
    <property type="hits" value="14 hits in 1184 CRISPR screens"/>
</dbReference>
<dbReference type="ChiTaRS" id="FBXW12">
    <property type="organism name" value="human"/>
</dbReference>
<dbReference type="GenomeRNAi" id="285231"/>
<dbReference type="Pharos" id="Q6X9E4">
    <property type="development level" value="Tbio"/>
</dbReference>
<dbReference type="PRO" id="PR:Q6X9E4"/>
<dbReference type="Proteomes" id="UP000005640">
    <property type="component" value="Chromosome 3"/>
</dbReference>
<dbReference type="RNAct" id="Q6X9E4">
    <property type="molecule type" value="protein"/>
</dbReference>
<dbReference type="Bgee" id="ENSG00000164049">
    <property type="expression patterns" value="Expressed in body of pancreas and 84 other cell types or tissues"/>
</dbReference>
<dbReference type="ExpressionAtlas" id="Q6X9E4">
    <property type="expression patterns" value="baseline and differential"/>
</dbReference>
<dbReference type="GO" id="GO:0005829">
    <property type="term" value="C:cytosol"/>
    <property type="evidence" value="ECO:0000304"/>
    <property type="project" value="Reactome"/>
</dbReference>
<dbReference type="GO" id="GO:0016567">
    <property type="term" value="P:protein ubiquitination"/>
    <property type="evidence" value="ECO:0007669"/>
    <property type="project" value="UniProtKB-UniPathway"/>
</dbReference>
<dbReference type="CDD" id="cd22137">
    <property type="entry name" value="F-box_FBXW12"/>
    <property type="match status" value="1"/>
</dbReference>
<dbReference type="FunFam" id="1.20.1280.50:FF:000076">
    <property type="entry name" value="F-box/WD repeat-containing protein 12"/>
    <property type="match status" value="1"/>
</dbReference>
<dbReference type="FunFam" id="2.130.10.10:FF:002594">
    <property type="entry name" value="F-box/WD repeat-containing protein 12"/>
    <property type="match status" value="1"/>
</dbReference>
<dbReference type="Gene3D" id="1.20.1280.50">
    <property type="match status" value="1"/>
</dbReference>
<dbReference type="Gene3D" id="2.130.10.10">
    <property type="entry name" value="YVTN repeat-like/Quinoprotein amine dehydrogenase"/>
    <property type="match status" value="1"/>
</dbReference>
<dbReference type="InterPro" id="IPR036047">
    <property type="entry name" value="F-box-like_dom_sf"/>
</dbReference>
<dbReference type="InterPro" id="IPR001810">
    <property type="entry name" value="F-box_dom"/>
</dbReference>
<dbReference type="InterPro" id="IPR052121">
    <property type="entry name" value="F-box_SCF_Substrate_Recog"/>
</dbReference>
<dbReference type="InterPro" id="IPR011044">
    <property type="entry name" value="Quino_amine_DH_bsu"/>
</dbReference>
<dbReference type="InterPro" id="IPR015943">
    <property type="entry name" value="WD40/YVTN_repeat-like_dom_sf"/>
</dbReference>
<dbReference type="PANTHER" id="PTHR46550:SF2">
    <property type="entry name" value="EXPRESSED SEQUENCE C85627-RELATED"/>
    <property type="match status" value="1"/>
</dbReference>
<dbReference type="PANTHER" id="PTHR46550">
    <property type="entry name" value="F-BOX ONLY PROTEIN 3"/>
    <property type="match status" value="1"/>
</dbReference>
<dbReference type="Pfam" id="PF12937">
    <property type="entry name" value="F-box-like"/>
    <property type="match status" value="1"/>
</dbReference>
<dbReference type="SMART" id="SM00256">
    <property type="entry name" value="FBOX"/>
    <property type="match status" value="1"/>
</dbReference>
<dbReference type="SUPFAM" id="SSF81383">
    <property type="entry name" value="F-box domain"/>
    <property type="match status" value="1"/>
</dbReference>
<dbReference type="SUPFAM" id="SSF50969">
    <property type="entry name" value="YVTN repeat-like/Quinoprotein amine dehydrogenase"/>
    <property type="match status" value="1"/>
</dbReference>
<dbReference type="PROSITE" id="PS50181">
    <property type="entry name" value="FBOX"/>
    <property type="match status" value="1"/>
</dbReference>
<accession>Q6X9E4</accession>
<accession>E9PG36</accession>
<accession>Q494Y9</accession>
<accession>Q494Z0</accession>
<comment type="function">
    <text evidence="5">Substrate-recognition component of the SCF (SKP1-CUL1-F-box protein)-type E3 ubiquitin ligase complex (PubMed:26171402). Promotes degradation of interleukin-22 receptor subunit IL22RA1 in resting and IL22-stimulated conditions by facilitating its ubiquitination (PubMed:26171402). Functions as a cell growth suppressor (PubMed:26171402).</text>
</comment>
<comment type="pathway">
    <text evidence="5">Protein modification; protein ubiquitination.</text>
</comment>
<comment type="subunit">
    <text evidence="1 5">Interacts with SKP1 (PubMed:26171402). Interacts with CUL1 (By similarity). Interacts with IL22RA1 (PubMed:26171402).</text>
</comment>
<comment type="alternative products">
    <event type="alternative splicing"/>
    <isoform>
        <id>Q6X9E4-1</id>
        <name>1</name>
        <sequence type="displayed"/>
    </isoform>
    <isoform>
        <id>Q6X9E4-2</id>
        <name>2</name>
        <sequence type="described" ref="VSP_042911"/>
    </isoform>
    <isoform>
        <id>Q6X9E4-3</id>
        <name>3</name>
        <sequence type="described" ref="VSP_044601"/>
    </isoform>
</comment>
<comment type="tissue specificity">
    <text evidence="3">Ubiquitously expressed.</text>
</comment>
<reference key="1">
    <citation type="journal article" date="2004" name="Mol. Biol. Rep.">
        <title>cDNA cloning and expression analysis of a novel human F-box domain containing gene.</title>
        <authorList>
            <person name="Zeng L."/>
            <person name="Gu S."/>
            <person name="Li Y."/>
            <person name="Wang W."/>
            <person name="Huang Y."/>
            <person name="Ye X."/>
            <person name="Xu J."/>
            <person name="Zhao E."/>
            <person name="Ji C."/>
            <person name="Ying K."/>
            <person name="Xie Y."/>
            <person name="Mao Y."/>
        </authorList>
    </citation>
    <scope>NUCLEOTIDE SEQUENCE [MRNA] (ISOFORM 1)</scope>
    <scope>TISSUE SPECIFICITY</scope>
    <scope>VARIANT ASP-273</scope>
    <source>
        <tissue>Brain</tissue>
    </source>
</reference>
<reference key="2">
    <citation type="journal article" date="2006" name="Nature">
        <title>The DNA sequence, annotation and analysis of human chromosome 3.</title>
        <authorList>
            <person name="Muzny D.M."/>
            <person name="Scherer S.E."/>
            <person name="Kaul R."/>
            <person name="Wang J."/>
            <person name="Yu J."/>
            <person name="Sudbrak R."/>
            <person name="Buhay C.J."/>
            <person name="Chen R."/>
            <person name="Cree A."/>
            <person name="Ding Y."/>
            <person name="Dugan-Rocha S."/>
            <person name="Gill R."/>
            <person name="Gunaratne P."/>
            <person name="Harris R.A."/>
            <person name="Hawes A.C."/>
            <person name="Hernandez J."/>
            <person name="Hodgson A.V."/>
            <person name="Hume J."/>
            <person name="Jackson A."/>
            <person name="Khan Z.M."/>
            <person name="Kovar-Smith C."/>
            <person name="Lewis L.R."/>
            <person name="Lozado R.J."/>
            <person name="Metzker M.L."/>
            <person name="Milosavljevic A."/>
            <person name="Miner G.R."/>
            <person name="Morgan M.B."/>
            <person name="Nazareth L.V."/>
            <person name="Scott G."/>
            <person name="Sodergren E."/>
            <person name="Song X.-Z."/>
            <person name="Steffen D."/>
            <person name="Wei S."/>
            <person name="Wheeler D.A."/>
            <person name="Wright M.W."/>
            <person name="Worley K.C."/>
            <person name="Yuan Y."/>
            <person name="Zhang Z."/>
            <person name="Adams C.Q."/>
            <person name="Ansari-Lari M.A."/>
            <person name="Ayele M."/>
            <person name="Brown M.J."/>
            <person name="Chen G."/>
            <person name="Chen Z."/>
            <person name="Clendenning J."/>
            <person name="Clerc-Blankenburg K.P."/>
            <person name="Chen R."/>
            <person name="Chen Z."/>
            <person name="Davis C."/>
            <person name="Delgado O."/>
            <person name="Dinh H.H."/>
            <person name="Dong W."/>
            <person name="Draper H."/>
            <person name="Ernst S."/>
            <person name="Fu G."/>
            <person name="Gonzalez-Garay M.L."/>
            <person name="Garcia D.K."/>
            <person name="Gillett W."/>
            <person name="Gu J."/>
            <person name="Hao B."/>
            <person name="Haugen E."/>
            <person name="Havlak P."/>
            <person name="He X."/>
            <person name="Hennig S."/>
            <person name="Hu S."/>
            <person name="Huang W."/>
            <person name="Jackson L.R."/>
            <person name="Jacob L.S."/>
            <person name="Kelly S.H."/>
            <person name="Kube M."/>
            <person name="Levy R."/>
            <person name="Li Z."/>
            <person name="Liu B."/>
            <person name="Liu J."/>
            <person name="Liu W."/>
            <person name="Lu J."/>
            <person name="Maheshwari M."/>
            <person name="Nguyen B.-V."/>
            <person name="Okwuonu G.O."/>
            <person name="Palmeiri A."/>
            <person name="Pasternak S."/>
            <person name="Perez L.M."/>
            <person name="Phelps K.A."/>
            <person name="Plopper F.J."/>
            <person name="Qiang B."/>
            <person name="Raymond C."/>
            <person name="Rodriguez R."/>
            <person name="Saenphimmachak C."/>
            <person name="Santibanez J."/>
            <person name="Shen H."/>
            <person name="Shen Y."/>
            <person name="Subramanian S."/>
            <person name="Tabor P.E."/>
            <person name="Verduzco D."/>
            <person name="Waldron L."/>
            <person name="Wang J."/>
            <person name="Wang J."/>
            <person name="Wang Q."/>
            <person name="Williams G.A."/>
            <person name="Wong G.K.-S."/>
            <person name="Yao Z."/>
            <person name="Zhang J."/>
            <person name="Zhang X."/>
            <person name="Zhao G."/>
            <person name="Zhou J."/>
            <person name="Zhou Y."/>
            <person name="Nelson D."/>
            <person name="Lehrach H."/>
            <person name="Reinhardt R."/>
            <person name="Naylor S.L."/>
            <person name="Yang H."/>
            <person name="Olson M."/>
            <person name="Weinstock G."/>
            <person name="Gibbs R.A."/>
        </authorList>
    </citation>
    <scope>NUCLEOTIDE SEQUENCE [LARGE SCALE GENOMIC DNA]</scope>
</reference>
<reference key="3">
    <citation type="journal article" date="2004" name="Genome Res.">
        <title>The status, quality, and expansion of the NIH full-length cDNA project: the Mammalian Gene Collection (MGC).</title>
        <authorList>
            <consortium name="The MGC Project Team"/>
        </authorList>
    </citation>
    <scope>NUCLEOTIDE SEQUENCE [LARGE SCALE MRNA] (ISOFORMS 2 AND 3)</scope>
    <scope>VARIANT ASP-273</scope>
</reference>
<reference evidence="7" key="4">
    <citation type="journal article" date="2015" name="J. Immunol. Res.">
        <title>The Human IL-22 Receptor Is Regulated through the Action of the Novel E3 Ligase Subunit FBXW12, Which Functions as an Epithelial Growth Suppressor.</title>
        <authorList>
            <person name="Franz J."/>
            <person name="Jerome J."/>
            <person name="Lear T."/>
            <person name="Gong Q."/>
            <person name="Weathington N.M."/>
        </authorList>
    </citation>
    <scope>FUNCTION</scope>
    <scope>PATHWAY</scope>
    <scope>INTERACTION WITH SKP1 AND IL22RA1</scope>
</reference>